<dbReference type="EMBL" id="FO080618">
    <property type="protein sequence ID" value="CCD83372.1"/>
    <property type="molecule type" value="Genomic_DNA"/>
</dbReference>
<dbReference type="PIR" id="G88478">
    <property type="entry name" value="G88478"/>
</dbReference>
<dbReference type="RefSeq" id="NP_498379.1">
    <property type="nucleotide sequence ID" value="NM_065978.8"/>
</dbReference>
<dbReference type="SMR" id="Q09391"/>
<dbReference type="FunCoup" id="Q09391">
    <property type="interactions" value="1280"/>
</dbReference>
<dbReference type="PaxDb" id="6239-F47D12.6"/>
<dbReference type="EnsemblMetazoa" id="F47D12.6.1">
    <property type="protein sequence ID" value="F47D12.6.1"/>
    <property type="gene ID" value="WBGene00018562"/>
</dbReference>
<dbReference type="GeneID" id="185934"/>
<dbReference type="KEGG" id="cel:CELE_F47D12.6"/>
<dbReference type="UCSC" id="F47D12.6">
    <property type="organism name" value="c. elegans"/>
</dbReference>
<dbReference type="AGR" id="WB:WBGene00018562"/>
<dbReference type="CTD" id="185934"/>
<dbReference type="WormBase" id="F47D12.6">
    <property type="protein sequence ID" value="CE01950"/>
    <property type="gene ID" value="WBGene00018562"/>
</dbReference>
<dbReference type="eggNOG" id="ENOG502THZ4">
    <property type="taxonomic scope" value="Eukaryota"/>
</dbReference>
<dbReference type="HOGENOM" id="CLU_2252399_0_0_1"/>
<dbReference type="InParanoid" id="Q09391"/>
<dbReference type="OMA" id="HDHAYII"/>
<dbReference type="OrthoDB" id="5836590at2759"/>
<dbReference type="PRO" id="PR:Q09391"/>
<dbReference type="Proteomes" id="UP000001940">
    <property type="component" value="Chromosome III"/>
</dbReference>
<dbReference type="Bgee" id="WBGene00018562">
    <property type="expression patterns" value="Expressed in pharyngeal muscle cell (C elegans) and 3 other cell types or tissues"/>
</dbReference>
<sequence>MDNIQTFFDQYVHLPSEISSKHDHAYIILILLSVILILLLLICNLCICYFIRQRRRRELIDYPSNTLQYIPFPRNVRKPYRTESGTSSSNRMMLPPRQHV</sequence>
<reference key="1">
    <citation type="journal article" date="1998" name="Science">
        <title>Genome sequence of the nematode C. elegans: a platform for investigating biology.</title>
        <authorList>
            <consortium name="The C. elegans sequencing consortium"/>
        </authorList>
    </citation>
    <scope>NUCLEOTIDE SEQUENCE [LARGE SCALE GENOMIC DNA]</scope>
    <source>
        <strain>Bristol N2</strain>
    </source>
</reference>
<evidence type="ECO:0000256" key="1">
    <source>
        <dbReference type="SAM" id="MobiDB-lite"/>
    </source>
</evidence>
<accession>Q09391</accession>
<gene>
    <name type="ORF">F47D12.6</name>
</gene>
<feature type="chain" id="PRO_0000065353" description="Uncharacterized protein F47D12.6">
    <location>
        <begin position="1"/>
        <end position="100"/>
    </location>
</feature>
<feature type="region of interest" description="Disordered" evidence="1">
    <location>
        <begin position="78"/>
        <end position="100"/>
    </location>
</feature>
<keyword id="KW-1185">Reference proteome</keyword>
<organism>
    <name type="scientific">Caenorhabditis elegans</name>
    <dbReference type="NCBI Taxonomy" id="6239"/>
    <lineage>
        <taxon>Eukaryota</taxon>
        <taxon>Metazoa</taxon>
        <taxon>Ecdysozoa</taxon>
        <taxon>Nematoda</taxon>
        <taxon>Chromadorea</taxon>
        <taxon>Rhabditida</taxon>
        <taxon>Rhabditina</taxon>
        <taxon>Rhabditomorpha</taxon>
        <taxon>Rhabditoidea</taxon>
        <taxon>Rhabditidae</taxon>
        <taxon>Peloderinae</taxon>
        <taxon>Caenorhabditis</taxon>
    </lineage>
</organism>
<name>YR46_CAEEL</name>
<protein>
    <recommendedName>
        <fullName>Uncharacterized protein F47D12.6</fullName>
    </recommendedName>
</protein>
<proteinExistence type="predicted"/>